<reference key="1">
    <citation type="journal article" date="2001" name="Nature">
        <title>Complete genome sequence of Salmonella enterica serovar Typhimurium LT2.</title>
        <authorList>
            <person name="McClelland M."/>
            <person name="Sanderson K.E."/>
            <person name="Spieth J."/>
            <person name="Clifton S.W."/>
            <person name="Latreille P."/>
            <person name="Courtney L."/>
            <person name="Porwollik S."/>
            <person name="Ali J."/>
            <person name="Dante M."/>
            <person name="Du F."/>
            <person name="Hou S."/>
            <person name="Layman D."/>
            <person name="Leonard S."/>
            <person name="Nguyen C."/>
            <person name="Scott K."/>
            <person name="Holmes A."/>
            <person name="Grewal N."/>
            <person name="Mulvaney E."/>
            <person name="Ryan E."/>
            <person name="Sun H."/>
            <person name="Florea L."/>
            <person name="Miller W."/>
            <person name="Stoneking T."/>
            <person name="Nhan M."/>
            <person name="Waterston R."/>
            <person name="Wilson R.K."/>
        </authorList>
    </citation>
    <scope>NUCLEOTIDE SEQUENCE [LARGE SCALE GENOMIC DNA]</scope>
    <source>
        <strain>LT2 / SGSC1412 / ATCC 700720</strain>
    </source>
</reference>
<comment type="function">
    <text evidence="1">Catalyzes the interconversion of 2-phosphoglycerate and 3-phosphoglycerate.</text>
</comment>
<comment type="catalytic activity">
    <reaction evidence="1">
        <text>(2R)-2-phosphoglycerate = (2R)-3-phosphoglycerate</text>
        <dbReference type="Rhea" id="RHEA:15901"/>
        <dbReference type="ChEBI" id="CHEBI:58272"/>
        <dbReference type="ChEBI" id="CHEBI:58289"/>
        <dbReference type="EC" id="5.4.2.12"/>
    </reaction>
</comment>
<comment type="cofactor">
    <cofactor evidence="1">
        <name>Mn(2+)</name>
        <dbReference type="ChEBI" id="CHEBI:29035"/>
    </cofactor>
    <text evidence="1">Binds 2 manganese ions per subunit.</text>
</comment>
<comment type="pathway">
    <text evidence="1">Carbohydrate degradation; glycolysis; pyruvate from D-glyceraldehyde 3-phosphate: step 3/5.</text>
</comment>
<comment type="subunit">
    <text evidence="1">Monomer.</text>
</comment>
<comment type="similarity">
    <text evidence="1">Belongs to the BPG-independent phosphoglycerate mutase family.</text>
</comment>
<protein>
    <recommendedName>
        <fullName evidence="1">2,3-bisphosphoglycerate-independent phosphoglycerate mutase</fullName>
        <shortName evidence="1">BPG-independent PGAM</shortName>
        <shortName evidence="1">Phosphoglyceromutase</shortName>
        <shortName evidence="1">iPGM</shortName>
        <ecNumber evidence="1">5.4.2.12</ecNumber>
    </recommendedName>
</protein>
<evidence type="ECO:0000255" key="1">
    <source>
        <dbReference type="HAMAP-Rule" id="MF_01038"/>
    </source>
</evidence>
<gene>
    <name evidence="1" type="primary">gpmI</name>
    <name type="synonym">pmgI</name>
    <name type="ordered locus">STM3704</name>
</gene>
<dbReference type="EC" id="5.4.2.12" evidence="1"/>
<dbReference type="EMBL" id="AE006468">
    <property type="protein sequence ID" value="AAL22563.1"/>
    <property type="molecule type" value="Genomic_DNA"/>
</dbReference>
<dbReference type="RefSeq" id="NP_462604.1">
    <property type="nucleotide sequence ID" value="NC_003197.2"/>
</dbReference>
<dbReference type="SMR" id="Q8ZL56"/>
<dbReference type="STRING" id="99287.STM3704"/>
<dbReference type="PaxDb" id="99287-STM3704"/>
<dbReference type="GeneID" id="1255228"/>
<dbReference type="KEGG" id="stm:STM3704"/>
<dbReference type="PATRIC" id="fig|99287.12.peg.3917"/>
<dbReference type="HOGENOM" id="CLU_026099_2_0_6"/>
<dbReference type="OMA" id="FMDGRDT"/>
<dbReference type="PhylomeDB" id="Q8ZL56"/>
<dbReference type="BioCyc" id="SENT99287:STM3704-MONOMER"/>
<dbReference type="UniPathway" id="UPA00109">
    <property type="reaction ID" value="UER00186"/>
</dbReference>
<dbReference type="Proteomes" id="UP000001014">
    <property type="component" value="Chromosome"/>
</dbReference>
<dbReference type="GO" id="GO:0005829">
    <property type="term" value="C:cytosol"/>
    <property type="evidence" value="ECO:0000318"/>
    <property type="project" value="GO_Central"/>
</dbReference>
<dbReference type="GO" id="GO:0030145">
    <property type="term" value="F:manganese ion binding"/>
    <property type="evidence" value="ECO:0000318"/>
    <property type="project" value="GO_Central"/>
</dbReference>
<dbReference type="GO" id="GO:0004619">
    <property type="term" value="F:phosphoglycerate mutase activity"/>
    <property type="evidence" value="ECO:0000318"/>
    <property type="project" value="GO_Central"/>
</dbReference>
<dbReference type="GO" id="GO:0005975">
    <property type="term" value="P:carbohydrate metabolic process"/>
    <property type="evidence" value="ECO:0000318"/>
    <property type="project" value="GO_Central"/>
</dbReference>
<dbReference type="GO" id="GO:0006007">
    <property type="term" value="P:glucose catabolic process"/>
    <property type="evidence" value="ECO:0007669"/>
    <property type="project" value="InterPro"/>
</dbReference>
<dbReference type="GO" id="GO:0006096">
    <property type="term" value="P:glycolytic process"/>
    <property type="evidence" value="ECO:0007669"/>
    <property type="project" value="UniProtKB-UniRule"/>
</dbReference>
<dbReference type="CDD" id="cd16010">
    <property type="entry name" value="iPGM"/>
    <property type="match status" value="1"/>
</dbReference>
<dbReference type="FunFam" id="3.40.1450.10:FF:000001">
    <property type="entry name" value="2,3-bisphosphoglycerate-independent phosphoglycerate mutase"/>
    <property type="match status" value="1"/>
</dbReference>
<dbReference type="FunFam" id="3.40.720.10:FF:000001">
    <property type="entry name" value="2,3-bisphosphoglycerate-independent phosphoglycerate mutase"/>
    <property type="match status" value="1"/>
</dbReference>
<dbReference type="Gene3D" id="3.40.720.10">
    <property type="entry name" value="Alkaline Phosphatase, subunit A"/>
    <property type="match status" value="1"/>
</dbReference>
<dbReference type="Gene3D" id="3.40.1450.10">
    <property type="entry name" value="BPG-independent phosphoglycerate mutase, domain B"/>
    <property type="match status" value="1"/>
</dbReference>
<dbReference type="HAMAP" id="MF_01038">
    <property type="entry name" value="GpmI"/>
    <property type="match status" value="1"/>
</dbReference>
<dbReference type="InterPro" id="IPR017850">
    <property type="entry name" value="Alkaline_phosphatase_core_sf"/>
</dbReference>
<dbReference type="InterPro" id="IPR011258">
    <property type="entry name" value="BPG-indep_PGM_N"/>
</dbReference>
<dbReference type="InterPro" id="IPR006124">
    <property type="entry name" value="Metalloenzyme"/>
</dbReference>
<dbReference type="InterPro" id="IPR036646">
    <property type="entry name" value="PGAM_B_sf"/>
</dbReference>
<dbReference type="InterPro" id="IPR005995">
    <property type="entry name" value="Pgm_bpd_ind"/>
</dbReference>
<dbReference type="NCBIfam" id="TIGR01307">
    <property type="entry name" value="pgm_bpd_ind"/>
    <property type="match status" value="1"/>
</dbReference>
<dbReference type="NCBIfam" id="NF003897">
    <property type="entry name" value="PRK05434.1-5"/>
    <property type="match status" value="1"/>
</dbReference>
<dbReference type="PANTHER" id="PTHR31637">
    <property type="entry name" value="2,3-BISPHOSPHOGLYCERATE-INDEPENDENT PHOSPHOGLYCERATE MUTASE"/>
    <property type="match status" value="1"/>
</dbReference>
<dbReference type="PANTHER" id="PTHR31637:SF0">
    <property type="entry name" value="2,3-BISPHOSPHOGLYCERATE-INDEPENDENT PHOSPHOGLYCERATE MUTASE"/>
    <property type="match status" value="1"/>
</dbReference>
<dbReference type="Pfam" id="PF06415">
    <property type="entry name" value="iPGM_N"/>
    <property type="match status" value="1"/>
</dbReference>
<dbReference type="Pfam" id="PF01676">
    <property type="entry name" value="Metalloenzyme"/>
    <property type="match status" value="1"/>
</dbReference>
<dbReference type="PIRSF" id="PIRSF001492">
    <property type="entry name" value="IPGAM"/>
    <property type="match status" value="1"/>
</dbReference>
<dbReference type="SUPFAM" id="SSF64158">
    <property type="entry name" value="2,3-Bisphosphoglycerate-independent phosphoglycerate mutase, substrate-binding domain"/>
    <property type="match status" value="1"/>
</dbReference>
<dbReference type="SUPFAM" id="SSF53649">
    <property type="entry name" value="Alkaline phosphatase-like"/>
    <property type="match status" value="1"/>
</dbReference>
<sequence>MSVSKKPMVLVILDGYGYREEQQDNAILNAKTPVMDALWAKRPHTLIDASGLEVGLPDRQMGNSEVGHVNLGAGRIVYQDLTRLDVEIKERTFFANPVLTNAVDQAKNAGKAVHIMGLLSAGGVHSHEDHIMAMVELAAERGAEKIYLHAFLDGRDTPPRSAEASLKKFEDKFAALGKGRVASIVGRYYAMDRDNRWDRVEKAYDLMTLAQGEFQADTAVAGLQAAYARDENDEFVKATVIRAEGQADAAMEDGDTLIFMNFRADRAREITRAFVNADFDGFARKKVVNLNFVMLTEYAADIKTAVAYPPASLANTFGEWMAKNDKTQLRISETEKYAHVTFFFNGGVEEPFAGEERILINSPKVATYDLQPEMSSAELTEKLVAAIESGKYDTIICNYPNGDMVGHTGVMEAAIKAVEALDNCIEQVTKAVESVGGQLLITADHGNAEQMRDPATGQAHTAHTNLPVPLIYVGEKNVKAVEGGKLSDIAPTMLSLMGMEIPQEMTGKPLFIVE</sequence>
<proteinExistence type="inferred from homology"/>
<organism>
    <name type="scientific">Salmonella typhimurium (strain LT2 / SGSC1412 / ATCC 700720)</name>
    <dbReference type="NCBI Taxonomy" id="99287"/>
    <lineage>
        <taxon>Bacteria</taxon>
        <taxon>Pseudomonadati</taxon>
        <taxon>Pseudomonadota</taxon>
        <taxon>Gammaproteobacteria</taxon>
        <taxon>Enterobacterales</taxon>
        <taxon>Enterobacteriaceae</taxon>
        <taxon>Salmonella</taxon>
    </lineage>
</organism>
<feature type="chain" id="PRO_0000212200" description="2,3-bisphosphoglycerate-independent phosphoglycerate mutase">
    <location>
        <begin position="1"/>
        <end position="514"/>
    </location>
</feature>
<feature type="active site" description="Phosphoserine intermediate" evidence="1">
    <location>
        <position position="64"/>
    </location>
</feature>
<feature type="binding site" evidence="1">
    <location>
        <position position="14"/>
    </location>
    <ligand>
        <name>Mn(2+)</name>
        <dbReference type="ChEBI" id="CHEBI:29035"/>
        <label>2</label>
    </ligand>
</feature>
<feature type="binding site" evidence="1">
    <location>
        <position position="64"/>
    </location>
    <ligand>
        <name>Mn(2+)</name>
        <dbReference type="ChEBI" id="CHEBI:29035"/>
        <label>2</label>
    </ligand>
</feature>
<feature type="binding site" evidence="1">
    <location>
        <position position="125"/>
    </location>
    <ligand>
        <name>substrate</name>
    </ligand>
</feature>
<feature type="binding site" evidence="1">
    <location>
        <begin position="155"/>
        <end position="156"/>
    </location>
    <ligand>
        <name>substrate</name>
    </ligand>
</feature>
<feature type="binding site" evidence="1">
    <location>
        <position position="187"/>
    </location>
    <ligand>
        <name>substrate</name>
    </ligand>
</feature>
<feature type="binding site" evidence="1">
    <location>
        <position position="193"/>
    </location>
    <ligand>
        <name>substrate</name>
    </ligand>
</feature>
<feature type="binding site" evidence="1">
    <location>
        <begin position="263"/>
        <end position="266"/>
    </location>
    <ligand>
        <name>substrate</name>
    </ligand>
</feature>
<feature type="binding site" evidence="1">
    <location>
        <position position="336"/>
    </location>
    <ligand>
        <name>substrate</name>
    </ligand>
</feature>
<feature type="binding site" evidence="1">
    <location>
        <position position="403"/>
    </location>
    <ligand>
        <name>Mn(2+)</name>
        <dbReference type="ChEBI" id="CHEBI:29035"/>
        <label>1</label>
    </ligand>
</feature>
<feature type="binding site" evidence="1">
    <location>
        <position position="407"/>
    </location>
    <ligand>
        <name>Mn(2+)</name>
        <dbReference type="ChEBI" id="CHEBI:29035"/>
        <label>1</label>
    </ligand>
</feature>
<feature type="binding site" evidence="1">
    <location>
        <position position="444"/>
    </location>
    <ligand>
        <name>Mn(2+)</name>
        <dbReference type="ChEBI" id="CHEBI:29035"/>
        <label>2</label>
    </ligand>
</feature>
<feature type="binding site" evidence="1">
    <location>
        <position position="445"/>
    </location>
    <ligand>
        <name>Mn(2+)</name>
        <dbReference type="ChEBI" id="CHEBI:29035"/>
        <label>2</label>
    </ligand>
</feature>
<feature type="binding site" evidence="1">
    <location>
        <position position="463"/>
    </location>
    <ligand>
        <name>Mn(2+)</name>
        <dbReference type="ChEBI" id="CHEBI:29035"/>
        <label>1</label>
    </ligand>
</feature>
<keyword id="KW-0324">Glycolysis</keyword>
<keyword id="KW-0413">Isomerase</keyword>
<keyword id="KW-0464">Manganese</keyword>
<keyword id="KW-0479">Metal-binding</keyword>
<keyword id="KW-1185">Reference proteome</keyword>
<name>GPMI_SALTY</name>
<accession>Q8ZL56</accession>